<protein>
    <recommendedName>
        <fullName evidence="1">Peptidyl-tRNA hydrolase</fullName>
        <shortName evidence="1">Pth</shortName>
        <ecNumber evidence="1">3.1.1.29</ecNumber>
    </recommendedName>
</protein>
<reference key="1">
    <citation type="submission" date="2006-06" db="EMBL/GenBank/DDBJ databases">
        <title>Complete sequence of chromosome of Mesorhizobium sp. BNC1.</title>
        <authorList>
            <consortium name="US DOE Joint Genome Institute"/>
            <person name="Copeland A."/>
            <person name="Lucas S."/>
            <person name="Lapidus A."/>
            <person name="Barry K."/>
            <person name="Detter J.C."/>
            <person name="Glavina del Rio T."/>
            <person name="Hammon N."/>
            <person name="Israni S."/>
            <person name="Dalin E."/>
            <person name="Tice H."/>
            <person name="Pitluck S."/>
            <person name="Chertkov O."/>
            <person name="Brettin T."/>
            <person name="Bruce D."/>
            <person name="Han C."/>
            <person name="Tapia R."/>
            <person name="Gilna P."/>
            <person name="Schmutz J."/>
            <person name="Larimer F."/>
            <person name="Land M."/>
            <person name="Hauser L."/>
            <person name="Kyrpides N."/>
            <person name="Mikhailova N."/>
            <person name="Richardson P."/>
        </authorList>
    </citation>
    <scope>NUCLEOTIDE SEQUENCE [LARGE SCALE GENOMIC DNA]</scope>
    <source>
        <strain>BNC1</strain>
    </source>
</reference>
<comment type="function">
    <text evidence="1">Hydrolyzes ribosome-free peptidyl-tRNAs (with 1 or more amino acids incorporated), which drop off the ribosome during protein synthesis, or as a result of ribosome stalling.</text>
</comment>
<comment type="function">
    <text evidence="1">Catalyzes the release of premature peptidyl moieties from peptidyl-tRNA molecules trapped in stalled 50S ribosomal subunits, and thus maintains levels of free tRNAs and 50S ribosomes.</text>
</comment>
<comment type="catalytic activity">
    <reaction evidence="1">
        <text>an N-acyl-L-alpha-aminoacyl-tRNA + H2O = an N-acyl-L-amino acid + a tRNA + H(+)</text>
        <dbReference type="Rhea" id="RHEA:54448"/>
        <dbReference type="Rhea" id="RHEA-COMP:10123"/>
        <dbReference type="Rhea" id="RHEA-COMP:13883"/>
        <dbReference type="ChEBI" id="CHEBI:15377"/>
        <dbReference type="ChEBI" id="CHEBI:15378"/>
        <dbReference type="ChEBI" id="CHEBI:59874"/>
        <dbReference type="ChEBI" id="CHEBI:78442"/>
        <dbReference type="ChEBI" id="CHEBI:138191"/>
        <dbReference type="EC" id="3.1.1.29"/>
    </reaction>
</comment>
<comment type="subunit">
    <text evidence="1">Monomer.</text>
</comment>
<comment type="subcellular location">
    <subcellularLocation>
        <location evidence="1">Cytoplasm</location>
    </subcellularLocation>
</comment>
<comment type="similarity">
    <text evidence="1">Belongs to the PTH family.</text>
</comment>
<proteinExistence type="inferred from homology"/>
<feature type="chain" id="PRO_0000264056" description="Peptidyl-tRNA hydrolase">
    <location>
        <begin position="1"/>
        <end position="239"/>
    </location>
</feature>
<feature type="region of interest" description="Disordered" evidence="2">
    <location>
        <begin position="199"/>
        <end position="227"/>
    </location>
</feature>
<feature type="compositionally biased region" description="Basic residues" evidence="2">
    <location>
        <begin position="203"/>
        <end position="213"/>
    </location>
</feature>
<feature type="active site" description="Proton acceptor" evidence="1">
    <location>
        <position position="19"/>
    </location>
</feature>
<feature type="binding site" evidence="1">
    <location>
        <position position="14"/>
    </location>
    <ligand>
        <name>tRNA</name>
        <dbReference type="ChEBI" id="CHEBI:17843"/>
    </ligand>
</feature>
<feature type="binding site" evidence="1">
    <location>
        <position position="64"/>
    </location>
    <ligand>
        <name>tRNA</name>
        <dbReference type="ChEBI" id="CHEBI:17843"/>
    </ligand>
</feature>
<feature type="binding site" evidence="1">
    <location>
        <position position="66"/>
    </location>
    <ligand>
        <name>tRNA</name>
        <dbReference type="ChEBI" id="CHEBI:17843"/>
    </ligand>
</feature>
<feature type="binding site" evidence="1">
    <location>
        <position position="112"/>
    </location>
    <ligand>
        <name>tRNA</name>
        <dbReference type="ChEBI" id="CHEBI:17843"/>
    </ligand>
</feature>
<feature type="site" description="Discriminates between blocked and unblocked aminoacyl-tRNA" evidence="1">
    <location>
        <position position="9"/>
    </location>
</feature>
<feature type="site" description="Stabilizes the basic form of H active site to accept a proton" evidence="1">
    <location>
        <position position="91"/>
    </location>
</feature>
<dbReference type="EC" id="3.1.1.29" evidence="1"/>
<dbReference type="EMBL" id="CP000390">
    <property type="protein sequence ID" value="ABG63550.1"/>
    <property type="molecule type" value="Genomic_DNA"/>
</dbReference>
<dbReference type="SMR" id="Q11GC5"/>
<dbReference type="STRING" id="266779.Meso_2158"/>
<dbReference type="KEGG" id="mes:Meso_2158"/>
<dbReference type="eggNOG" id="COG0193">
    <property type="taxonomic scope" value="Bacteria"/>
</dbReference>
<dbReference type="HOGENOM" id="CLU_062456_1_1_5"/>
<dbReference type="OrthoDB" id="9800507at2"/>
<dbReference type="GO" id="GO:0005737">
    <property type="term" value="C:cytoplasm"/>
    <property type="evidence" value="ECO:0007669"/>
    <property type="project" value="UniProtKB-SubCell"/>
</dbReference>
<dbReference type="GO" id="GO:0004045">
    <property type="term" value="F:peptidyl-tRNA hydrolase activity"/>
    <property type="evidence" value="ECO:0007669"/>
    <property type="project" value="UniProtKB-UniRule"/>
</dbReference>
<dbReference type="GO" id="GO:0000049">
    <property type="term" value="F:tRNA binding"/>
    <property type="evidence" value="ECO:0007669"/>
    <property type="project" value="UniProtKB-UniRule"/>
</dbReference>
<dbReference type="GO" id="GO:0006515">
    <property type="term" value="P:protein quality control for misfolded or incompletely synthesized proteins"/>
    <property type="evidence" value="ECO:0007669"/>
    <property type="project" value="UniProtKB-UniRule"/>
</dbReference>
<dbReference type="GO" id="GO:0072344">
    <property type="term" value="P:rescue of stalled ribosome"/>
    <property type="evidence" value="ECO:0007669"/>
    <property type="project" value="UniProtKB-UniRule"/>
</dbReference>
<dbReference type="CDD" id="cd00462">
    <property type="entry name" value="PTH"/>
    <property type="match status" value="1"/>
</dbReference>
<dbReference type="FunFam" id="3.40.50.1470:FF:000001">
    <property type="entry name" value="Peptidyl-tRNA hydrolase"/>
    <property type="match status" value="1"/>
</dbReference>
<dbReference type="Gene3D" id="3.40.50.1470">
    <property type="entry name" value="Peptidyl-tRNA hydrolase"/>
    <property type="match status" value="1"/>
</dbReference>
<dbReference type="HAMAP" id="MF_00083">
    <property type="entry name" value="Pept_tRNA_hydro_bact"/>
    <property type="match status" value="1"/>
</dbReference>
<dbReference type="InterPro" id="IPR001328">
    <property type="entry name" value="Pept_tRNA_hydro"/>
</dbReference>
<dbReference type="InterPro" id="IPR018171">
    <property type="entry name" value="Pept_tRNA_hydro_CS"/>
</dbReference>
<dbReference type="InterPro" id="IPR036416">
    <property type="entry name" value="Pept_tRNA_hydro_sf"/>
</dbReference>
<dbReference type="NCBIfam" id="TIGR00447">
    <property type="entry name" value="pth"/>
    <property type="match status" value="1"/>
</dbReference>
<dbReference type="PANTHER" id="PTHR17224">
    <property type="entry name" value="PEPTIDYL-TRNA HYDROLASE"/>
    <property type="match status" value="1"/>
</dbReference>
<dbReference type="PANTHER" id="PTHR17224:SF1">
    <property type="entry name" value="PEPTIDYL-TRNA HYDROLASE"/>
    <property type="match status" value="1"/>
</dbReference>
<dbReference type="Pfam" id="PF01195">
    <property type="entry name" value="Pept_tRNA_hydro"/>
    <property type="match status" value="1"/>
</dbReference>
<dbReference type="SUPFAM" id="SSF53178">
    <property type="entry name" value="Peptidyl-tRNA hydrolase-like"/>
    <property type="match status" value="1"/>
</dbReference>
<dbReference type="PROSITE" id="PS01196">
    <property type="entry name" value="PEPT_TRNA_HYDROL_2"/>
    <property type="match status" value="1"/>
</dbReference>
<keyword id="KW-0963">Cytoplasm</keyword>
<keyword id="KW-0378">Hydrolase</keyword>
<keyword id="KW-0694">RNA-binding</keyword>
<keyword id="KW-0820">tRNA-binding</keyword>
<name>PTH_CHESB</name>
<sequence>MLLLAGLGNPGPQYQNHRHNVGFMAADAIFRRHSFSPWSKKFSALVAEGRVGTEKLLLVKPQTFMNLSGQAVGEAMRFYKLQPSDIIVFYDELDLAPGKVRVKRGSGSGGHNGIKSIDAHCGQDYRRVRIGIGHPGDKARVTPHVLGDFAKADHAWLDPLLDAMAENVDLLITGDESGFMNKASLAVQGKAADIEMAGEKPAQKGRSHIRQARPKAPPAELPSSGPMAAMLKKLFGGKE</sequence>
<organism>
    <name type="scientific">Chelativorans sp. (strain BNC1)</name>
    <dbReference type="NCBI Taxonomy" id="266779"/>
    <lineage>
        <taxon>Bacteria</taxon>
        <taxon>Pseudomonadati</taxon>
        <taxon>Pseudomonadota</taxon>
        <taxon>Alphaproteobacteria</taxon>
        <taxon>Hyphomicrobiales</taxon>
        <taxon>Phyllobacteriaceae</taxon>
        <taxon>Chelativorans</taxon>
    </lineage>
</organism>
<accession>Q11GC5</accession>
<gene>
    <name evidence="1" type="primary">pth</name>
    <name type="ordered locus">Meso_2158</name>
</gene>
<evidence type="ECO:0000255" key="1">
    <source>
        <dbReference type="HAMAP-Rule" id="MF_00083"/>
    </source>
</evidence>
<evidence type="ECO:0000256" key="2">
    <source>
        <dbReference type="SAM" id="MobiDB-lite"/>
    </source>
</evidence>